<feature type="chain" id="PRO_1000066176" description="Protein-methionine-sulfoxide reductase heme-binding subunit MsrQ">
    <location>
        <begin position="1"/>
        <end position="218"/>
    </location>
</feature>
<feature type="transmembrane region" description="Helical" evidence="1">
    <location>
        <begin position="12"/>
        <end position="32"/>
    </location>
</feature>
<feature type="transmembrane region" description="Helical" evidence="1">
    <location>
        <begin position="82"/>
        <end position="102"/>
    </location>
</feature>
<feature type="transmembrane region" description="Helical" evidence="1">
    <location>
        <begin position="118"/>
        <end position="138"/>
    </location>
</feature>
<feature type="transmembrane region" description="Helical" evidence="1">
    <location>
        <begin position="150"/>
        <end position="170"/>
    </location>
</feature>
<feature type="transmembrane region" description="Helical" evidence="1">
    <location>
        <begin position="180"/>
        <end position="200"/>
    </location>
</feature>
<evidence type="ECO:0000255" key="1">
    <source>
        <dbReference type="HAMAP-Rule" id="MF_01207"/>
    </source>
</evidence>
<organism>
    <name type="scientific">Herminiimonas arsenicoxydans</name>
    <dbReference type="NCBI Taxonomy" id="204773"/>
    <lineage>
        <taxon>Bacteria</taxon>
        <taxon>Pseudomonadati</taxon>
        <taxon>Pseudomonadota</taxon>
        <taxon>Betaproteobacteria</taxon>
        <taxon>Burkholderiales</taxon>
        <taxon>Oxalobacteraceae</taxon>
        <taxon>Herminiimonas</taxon>
    </lineage>
</organism>
<keyword id="KW-0997">Cell inner membrane</keyword>
<keyword id="KW-1003">Cell membrane</keyword>
<keyword id="KW-0249">Electron transport</keyword>
<keyword id="KW-0285">Flavoprotein</keyword>
<keyword id="KW-0288">FMN</keyword>
<keyword id="KW-0349">Heme</keyword>
<keyword id="KW-0408">Iron</keyword>
<keyword id="KW-0472">Membrane</keyword>
<keyword id="KW-0479">Metal-binding</keyword>
<keyword id="KW-1185">Reference proteome</keyword>
<keyword id="KW-0812">Transmembrane</keyword>
<keyword id="KW-1133">Transmembrane helix</keyword>
<keyword id="KW-0813">Transport</keyword>
<dbReference type="EMBL" id="CU207211">
    <property type="protein sequence ID" value="CAL63239.1"/>
    <property type="molecule type" value="Genomic_DNA"/>
</dbReference>
<dbReference type="SMR" id="A4G9Q2"/>
<dbReference type="STRING" id="204773.HEAR3130"/>
<dbReference type="KEGG" id="har:HEAR3130"/>
<dbReference type="eggNOG" id="COG2717">
    <property type="taxonomic scope" value="Bacteria"/>
</dbReference>
<dbReference type="HOGENOM" id="CLU_080662_0_1_4"/>
<dbReference type="OrthoDB" id="9788328at2"/>
<dbReference type="Proteomes" id="UP000006697">
    <property type="component" value="Chromosome"/>
</dbReference>
<dbReference type="GO" id="GO:0005886">
    <property type="term" value="C:plasma membrane"/>
    <property type="evidence" value="ECO:0007669"/>
    <property type="project" value="UniProtKB-SubCell"/>
</dbReference>
<dbReference type="GO" id="GO:0009055">
    <property type="term" value="F:electron transfer activity"/>
    <property type="evidence" value="ECO:0007669"/>
    <property type="project" value="UniProtKB-UniRule"/>
</dbReference>
<dbReference type="GO" id="GO:0010181">
    <property type="term" value="F:FMN binding"/>
    <property type="evidence" value="ECO:0007669"/>
    <property type="project" value="UniProtKB-UniRule"/>
</dbReference>
<dbReference type="GO" id="GO:0020037">
    <property type="term" value="F:heme binding"/>
    <property type="evidence" value="ECO:0007669"/>
    <property type="project" value="UniProtKB-UniRule"/>
</dbReference>
<dbReference type="GO" id="GO:0046872">
    <property type="term" value="F:metal ion binding"/>
    <property type="evidence" value="ECO:0007669"/>
    <property type="project" value="UniProtKB-KW"/>
</dbReference>
<dbReference type="GO" id="GO:0016679">
    <property type="term" value="F:oxidoreductase activity, acting on diphenols and related substances as donors"/>
    <property type="evidence" value="ECO:0007669"/>
    <property type="project" value="TreeGrafter"/>
</dbReference>
<dbReference type="GO" id="GO:0030091">
    <property type="term" value="P:protein repair"/>
    <property type="evidence" value="ECO:0007669"/>
    <property type="project" value="UniProtKB-UniRule"/>
</dbReference>
<dbReference type="HAMAP" id="MF_01207">
    <property type="entry name" value="MsrQ"/>
    <property type="match status" value="1"/>
</dbReference>
<dbReference type="InterPro" id="IPR013130">
    <property type="entry name" value="Fe3_Rdtase_TM_dom"/>
</dbReference>
<dbReference type="InterPro" id="IPR022837">
    <property type="entry name" value="MsrQ-like"/>
</dbReference>
<dbReference type="NCBIfam" id="NF003836">
    <property type="entry name" value="PRK05419.2-3"/>
    <property type="match status" value="1"/>
</dbReference>
<dbReference type="PANTHER" id="PTHR36964">
    <property type="entry name" value="PROTEIN-METHIONINE-SULFOXIDE REDUCTASE HEME-BINDING SUBUNIT MSRQ"/>
    <property type="match status" value="1"/>
</dbReference>
<dbReference type="PANTHER" id="PTHR36964:SF1">
    <property type="entry name" value="PROTEIN-METHIONINE-SULFOXIDE REDUCTASE HEME-BINDING SUBUNIT MSRQ"/>
    <property type="match status" value="1"/>
</dbReference>
<dbReference type="Pfam" id="PF01794">
    <property type="entry name" value="Ferric_reduct"/>
    <property type="match status" value="1"/>
</dbReference>
<sequence>MMTFHPSPPQLTLIKSMLFIAALLPFGRLALFTLTDQLGANPIEFITRNTGDWTLYFLCMTLAITPLRRLSQWNWLIRLRRMLGLFAFFYACLHFTTFLWFDHFFDVNEMLKDVVKRPFITVGFSAFVLLIPLAITSTNGMVKRLGGKRWQWLHRLVYVIAALGILHYWWMKAGKHDFEQPIIFGTIVAVLLLVRVFWAWQKRSKNNALAGTSDCRTG</sequence>
<name>MSRQ_HERAR</name>
<reference key="1">
    <citation type="journal article" date="2007" name="PLoS Genet.">
        <title>A tale of two oxidation states: bacterial colonization of arsenic-rich environments.</title>
        <authorList>
            <person name="Muller D."/>
            <person name="Medigue C."/>
            <person name="Koechler S."/>
            <person name="Barbe V."/>
            <person name="Barakat M."/>
            <person name="Talla E."/>
            <person name="Bonnefoy V."/>
            <person name="Krin E."/>
            <person name="Arsene-Ploetze F."/>
            <person name="Carapito C."/>
            <person name="Chandler M."/>
            <person name="Cournoyer B."/>
            <person name="Cruveiller S."/>
            <person name="Dossat C."/>
            <person name="Duval S."/>
            <person name="Heymann M."/>
            <person name="Leize E."/>
            <person name="Lieutaud A."/>
            <person name="Lievremont D."/>
            <person name="Makita Y."/>
            <person name="Mangenot S."/>
            <person name="Nitschke W."/>
            <person name="Ortet P."/>
            <person name="Perdrial N."/>
            <person name="Schoepp B."/>
            <person name="Siguier P."/>
            <person name="Simeonova D.D."/>
            <person name="Rouy Z."/>
            <person name="Segurens B."/>
            <person name="Turlin E."/>
            <person name="Vallenet D."/>
            <person name="van Dorsselaer A."/>
            <person name="Weiss S."/>
            <person name="Weissenbach J."/>
            <person name="Lett M.-C."/>
            <person name="Danchin A."/>
            <person name="Bertin P.N."/>
        </authorList>
    </citation>
    <scope>NUCLEOTIDE SEQUENCE [LARGE SCALE GENOMIC DNA]</scope>
    <source>
        <strain>ULPAs1</strain>
    </source>
</reference>
<comment type="function">
    <text evidence="1">Part of the MsrPQ system that repairs oxidized periplasmic proteins containing methionine sulfoxide residues (Met-O), using respiratory chain electrons. Thus protects these proteins from oxidative-stress damage caused by reactive species of oxygen and chlorine generated by the host defense mechanisms. MsrPQ is essential for the maintenance of envelope integrity under bleach stress, rescuing a wide series of structurally unrelated periplasmic proteins from methionine oxidation. MsrQ provides electrons for reduction to the reductase catalytic subunit MsrP, using the quinone pool of the respiratory chain.</text>
</comment>
<comment type="cofactor">
    <cofactor evidence="1">
        <name>FMN</name>
        <dbReference type="ChEBI" id="CHEBI:58210"/>
    </cofactor>
    <text evidence="1">Binds 1 FMN per subunit.</text>
</comment>
<comment type="cofactor">
    <cofactor evidence="1">
        <name>heme b</name>
        <dbReference type="ChEBI" id="CHEBI:60344"/>
    </cofactor>
    <text evidence="1">Binds 1 heme b (iron(II)-protoporphyrin IX) group per subunit.</text>
</comment>
<comment type="subunit">
    <text evidence="1">Heterodimer of a catalytic subunit (MsrP) and a heme-binding subunit (MsrQ).</text>
</comment>
<comment type="subcellular location">
    <subcellularLocation>
        <location evidence="1">Cell inner membrane</location>
        <topology evidence="1">Multi-pass membrane protein</topology>
    </subcellularLocation>
</comment>
<comment type="similarity">
    <text evidence="1">Belongs to the MsrQ family.</text>
</comment>
<accession>A4G9Q2</accession>
<gene>
    <name evidence="1" type="primary">msrQ</name>
    <name type="ordered locus">HEAR3130</name>
</gene>
<proteinExistence type="inferred from homology"/>
<protein>
    <recommendedName>
        <fullName evidence="1">Protein-methionine-sulfoxide reductase heme-binding subunit MsrQ</fullName>
    </recommendedName>
    <alternativeName>
        <fullName evidence="1">Flavocytochrome MsrQ</fullName>
    </alternativeName>
</protein>